<protein>
    <recommendedName>
        <fullName>Axin interactor, dorsalization-associated protein</fullName>
    </recommendedName>
    <alternativeName>
        <fullName>Axin interaction partner and dorsalization antagonist</fullName>
    </alternativeName>
</protein>
<accession>Q5RAV3</accession>
<evidence type="ECO:0000250" key="1"/>
<evidence type="ECO:0000250" key="2">
    <source>
        <dbReference type="UniProtKB" id="Q96BJ3"/>
    </source>
</evidence>
<evidence type="ECO:0000255" key="3"/>
<evidence type="ECO:0000255" key="4">
    <source>
        <dbReference type="PROSITE-ProRule" id="PRU01259"/>
    </source>
</evidence>
<evidence type="ECO:0000256" key="5">
    <source>
        <dbReference type="SAM" id="MobiDB-lite"/>
    </source>
</evidence>
<evidence type="ECO:0000305" key="6"/>
<sequence>MSEVTRSLLQRWGASFRRGADFDSWGQLVEAIDEYQILARHLQKEAQAQHNNSEFTEEQKKTIGKIATCLELRSAALQSTQSQEEFKLEDLKKLEPILKNILTYNKEFPFDVQPVPLRRILAPGEEENLEFEEDEEEGGAGAGSPDSFPARVPGTLLPRLPSEPGMTLLTIRIEKIGLKDAGQCIDPYITVSVKDLNGIDLTPVQDTPVASRKEDTYVHFNVDIELQKHVEKLTKGAAIFFEFKHYKPKKRFTSTKCFAFMEMDEIKPGPIVIELYKKPTDFKRKKLQLLTKKPLYLHLHQTLHKE</sequence>
<proteinExistence type="evidence at transcript level"/>
<gene>
    <name type="primary">AIDA</name>
</gene>
<keyword id="KW-0175">Coiled coil</keyword>
<keyword id="KW-0217">Developmental protein</keyword>
<keyword id="KW-0597">Phosphoprotein</keyword>
<keyword id="KW-1185">Reference proteome</keyword>
<reference key="1">
    <citation type="submission" date="2004-11" db="EMBL/GenBank/DDBJ databases">
        <authorList>
            <consortium name="The German cDNA consortium"/>
        </authorList>
    </citation>
    <scope>NUCLEOTIDE SEQUENCE [LARGE SCALE MRNA]</scope>
    <source>
        <tissue>Heart</tissue>
    </source>
</reference>
<dbReference type="EMBL" id="CR858908">
    <property type="protein sequence ID" value="CAH91107.1"/>
    <property type="molecule type" value="mRNA"/>
</dbReference>
<dbReference type="RefSeq" id="NP_001125646.1">
    <property type="nucleotide sequence ID" value="NM_001132174.1"/>
</dbReference>
<dbReference type="BMRB" id="Q5RAV3"/>
<dbReference type="SMR" id="Q5RAV3"/>
<dbReference type="FunCoup" id="Q5RAV3">
    <property type="interactions" value="441"/>
</dbReference>
<dbReference type="Ensembl" id="ENSPPYT00000000214.2">
    <property type="protein sequence ID" value="ENSPPYP00000000199.1"/>
    <property type="gene ID" value="ENSPPYG00000000196.2"/>
</dbReference>
<dbReference type="GeneID" id="100172565"/>
<dbReference type="KEGG" id="pon:100172565"/>
<dbReference type="CTD" id="64853"/>
<dbReference type="eggNOG" id="ENOG502QSD5">
    <property type="taxonomic scope" value="Eukaryota"/>
</dbReference>
<dbReference type="GeneTree" id="ENSGT00390000016465"/>
<dbReference type="HOGENOM" id="CLU_064322_0_0_1"/>
<dbReference type="InParanoid" id="Q5RAV3"/>
<dbReference type="OMA" id="KLHAAWC"/>
<dbReference type="OrthoDB" id="428576at2759"/>
<dbReference type="TreeFam" id="TF328541"/>
<dbReference type="Proteomes" id="UP000001595">
    <property type="component" value="Chromosome 1"/>
</dbReference>
<dbReference type="GO" id="GO:0005737">
    <property type="term" value="C:cytoplasm"/>
    <property type="evidence" value="ECO:0007669"/>
    <property type="project" value="Ensembl"/>
</dbReference>
<dbReference type="GO" id="GO:0016020">
    <property type="term" value="C:membrane"/>
    <property type="evidence" value="ECO:0007669"/>
    <property type="project" value="TreeGrafter"/>
</dbReference>
<dbReference type="GO" id="GO:0035091">
    <property type="term" value="F:phosphatidylinositol binding"/>
    <property type="evidence" value="ECO:0007669"/>
    <property type="project" value="TreeGrafter"/>
</dbReference>
<dbReference type="GO" id="GO:0019904">
    <property type="term" value="F:protein domain specific binding"/>
    <property type="evidence" value="ECO:0007669"/>
    <property type="project" value="Ensembl"/>
</dbReference>
<dbReference type="GO" id="GO:0048264">
    <property type="term" value="P:determination of ventral identity"/>
    <property type="evidence" value="ECO:0007669"/>
    <property type="project" value="TreeGrafter"/>
</dbReference>
<dbReference type="GO" id="GO:0009953">
    <property type="term" value="P:dorsal/ventral pattern formation"/>
    <property type="evidence" value="ECO:0000250"/>
    <property type="project" value="UniProtKB"/>
</dbReference>
<dbReference type="GO" id="GO:0046329">
    <property type="term" value="P:negative regulation of JNK cascade"/>
    <property type="evidence" value="ECO:0000250"/>
    <property type="project" value="UniProtKB"/>
</dbReference>
<dbReference type="GO" id="GO:0031333">
    <property type="term" value="P:negative regulation of protein-containing complex assembly"/>
    <property type="evidence" value="ECO:0000250"/>
    <property type="project" value="UniProtKB"/>
</dbReference>
<dbReference type="FunFam" id="1.20.120.360:FF:000001">
    <property type="entry name" value="Axin interactor, dorsalization-associated protein"/>
    <property type="match status" value="1"/>
</dbReference>
<dbReference type="FunFam" id="2.60.40.150:FF:000059">
    <property type="entry name" value="Axin interactor, dorsalization-associated protein"/>
    <property type="match status" value="1"/>
</dbReference>
<dbReference type="Gene3D" id="1.20.120.360">
    <property type="entry name" value="Axin interactor, dorsalization-associated protein, N-terminal domain"/>
    <property type="match status" value="1"/>
</dbReference>
<dbReference type="Gene3D" id="2.60.40.150">
    <property type="entry name" value="C2 domain"/>
    <property type="match status" value="1"/>
</dbReference>
<dbReference type="InterPro" id="IPR025939">
    <property type="entry name" value="Aida_C"/>
</dbReference>
<dbReference type="InterPro" id="IPR023421">
    <property type="entry name" value="AIDA_N"/>
</dbReference>
<dbReference type="InterPro" id="IPR036818">
    <property type="entry name" value="AIDA_N_sf"/>
</dbReference>
<dbReference type="InterPro" id="IPR035892">
    <property type="entry name" value="C2_domain_sf"/>
</dbReference>
<dbReference type="PANTHER" id="PTHR28654">
    <property type="entry name" value="AXIN INTERACTOR, DORSALIZATION-ASSOCIATED PROTEIN"/>
    <property type="match status" value="1"/>
</dbReference>
<dbReference type="PANTHER" id="PTHR28654:SF1">
    <property type="entry name" value="AXIN INTERACTOR, DORSALIZATION-ASSOCIATED PROTEIN"/>
    <property type="match status" value="1"/>
</dbReference>
<dbReference type="Pfam" id="PF14186">
    <property type="entry name" value="Aida_C2"/>
    <property type="match status" value="1"/>
</dbReference>
<dbReference type="Pfam" id="PF08910">
    <property type="entry name" value="Aida_N"/>
    <property type="match status" value="1"/>
</dbReference>
<dbReference type="SUPFAM" id="SSF109779">
    <property type="entry name" value="Domain from hypothetical 2610208m17rik protein"/>
    <property type="match status" value="1"/>
</dbReference>
<dbReference type="PROSITE" id="PS51911">
    <property type="entry name" value="C2_AIDA"/>
    <property type="match status" value="1"/>
</dbReference>
<feature type="chain" id="PRO_0000305280" description="Axin interactor, dorsalization-associated protein">
    <location>
        <begin position="1"/>
        <end position="306"/>
    </location>
</feature>
<feature type="domain" description="C2 Aida-type" evidence="4">
    <location>
        <begin position="157"/>
        <end position="304"/>
    </location>
</feature>
<feature type="region of interest" description="Disordered" evidence="5">
    <location>
        <begin position="128"/>
        <end position="153"/>
    </location>
</feature>
<feature type="region of interest" description="Axin-binding" evidence="1">
    <location>
        <begin position="154"/>
        <end position="221"/>
    </location>
</feature>
<feature type="coiled-coil region" evidence="3">
    <location>
        <begin position="27"/>
        <end position="62"/>
    </location>
</feature>
<feature type="compositionally biased region" description="Acidic residues" evidence="5">
    <location>
        <begin position="128"/>
        <end position="138"/>
    </location>
</feature>
<feature type="modified residue" description="Phosphoserine" evidence="2">
    <location>
        <position position="144"/>
    </location>
</feature>
<organism>
    <name type="scientific">Pongo abelii</name>
    <name type="common">Sumatran orangutan</name>
    <name type="synonym">Pongo pygmaeus abelii</name>
    <dbReference type="NCBI Taxonomy" id="9601"/>
    <lineage>
        <taxon>Eukaryota</taxon>
        <taxon>Metazoa</taxon>
        <taxon>Chordata</taxon>
        <taxon>Craniata</taxon>
        <taxon>Vertebrata</taxon>
        <taxon>Euteleostomi</taxon>
        <taxon>Mammalia</taxon>
        <taxon>Eutheria</taxon>
        <taxon>Euarchontoglires</taxon>
        <taxon>Primates</taxon>
        <taxon>Haplorrhini</taxon>
        <taxon>Catarrhini</taxon>
        <taxon>Hominidae</taxon>
        <taxon>Pongo</taxon>
    </lineage>
</organism>
<comment type="function">
    <text evidence="1">Acts as a ventralizing factor during embryogenesis. Inhibits axin-mediated JNK activation by binding axin and disrupting axin homodimerization. This in turn antagonizes a Wnt/beta-catenin-independent dorsalization pathway activated by AXIN/JNK-signaling (By similarity).</text>
</comment>
<comment type="subunit">
    <text evidence="1">Interacts with AXIN1.</text>
</comment>
<comment type="similarity">
    <text evidence="4 6">Belongs to the AIDA family.</text>
</comment>
<name>AIDA_PONAB</name>